<gene>
    <name evidence="1" type="primary">dapA</name>
    <name type="ordered locus">BUAPTUC7_095</name>
</gene>
<accession>B8D702</accession>
<organism>
    <name type="scientific">Buchnera aphidicola subsp. Acyrthosiphon pisum (strain Tuc7)</name>
    <dbReference type="NCBI Taxonomy" id="561501"/>
    <lineage>
        <taxon>Bacteria</taxon>
        <taxon>Pseudomonadati</taxon>
        <taxon>Pseudomonadota</taxon>
        <taxon>Gammaproteobacteria</taxon>
        <taxon>Enterobacterales</taxon>
        <taxon>Erwiniaceae</taxon>
        <taxon>Buchnera</taxon>
    </lineage>
</organism>
<reference key="1">
    <citation type="journal article" date="2009" name="Science">
        <title>The dynamics and time scale of ongoing genomic erosion in symbiotic bacteria.</title>
        <authorList>
            <person name="Moran N.A."/>
            <person name="McLaughlin H.J."/>
            <person name="Sorek R."/>
        </authorList>
    </citation>
    <scope>NUCLEOTIDE SEQUENCE [LARGE SCALE GENOMIC DNA]</scope>
    <source>
        <strain>Tuc7</strain>
    </source>
</reference>
<evidence type="ECO:0000255" key="1">
    <source>
        <dbReference type="HAMAP-Rule" id="MF_00418"/>
    </source>
</evidence>
<evidence type="ECO:0000305" key="2"/>
<keyword id="KW-0028">Amino-acid biosynthesis</keyword>
<keyword id="KW-0963">Cytoplasm</keyword>
<keyword id="KW-0220">Diaminopimelate biosynthesis</keyword>
<keyword id="KW-0456">Lyase</keyword>
<keyword id="KW-0457">Lysine biosynthesis</keyword>
<keyword id="KW-0704">Schiff base</keyword>
<name>DAPA_BUCAT</name>
<protein>
    <recommendedName>
        <fullName evidence="1">4-hydroxy-tetrahydrodipicolinate synthase</fullName>
        <shortName evidence="1">HTPA synthase</shortName>
        <ecNumber evidence="1">4.3.3.7</ecNumber>
    </recommendedName>
</protein>
<proteinExistence type="inferred from homology"/>
<dbReference type="EC" id="4.3.3.7" evidence="1"/>
<dbReference type="EMBL" id="CP001158">
    <property type="protein sequence ID" value="ACL29917.1"/>
    <property type="molecule type" value="Genomic_DNA"/>
</dbReference>
<dbReference type="RefSeq" id="WP_010895943.1">
    <property type="nucleotide sequence ID" value="NC_011834.1"/>
</dbReference>
<dbReference type="SMR" id="B8D702"/>
<dbReference type="KEGG" id="bau:BUAPTUC7_095"/>
<dbReference type="HOGENOM" id="CLU_049343_7_1_6"/>
<dbReference type="UniPathway" id="UPA00034">
    <property type="reaction ID" value="UER00017"/>
</dbReference>
<dbReference type="GO" id="GO:0005829">
    <property type="term" value="C:cytosol"/>
    <property type="evidence" value="ECO:0007669"/>
    <property type="project" value="TreeGrafter"/>
</dbReference>
<dbReference type="GO" id="GO:0008840">
    <property type="term" value="F:4-hydroxy-tetrahydrodipicolinate synthase activity"/>
    <property type="evidence" value="ECO:0007669"/>
    <property type="project" value="UniProtKB-UniRule"/>
</dbReference>
<dbReference type="GO" id="GO:0019877">
    <property type="term" value="P:diaminopimelate biosynthetic process"/>
    <property type="evidence" value="ECO:0007669"/>
    <property type="project" value="UniProtKB-UniRule"/>
</dbReference>
<dbReference type="GO" id="GO:0009089">
    <property type="term" value="P:lysine biosynthetic process via diaminopimelate"/>
    <property type="evidence" value="ECO:0007669"/>
    <property type="project" value="UniProtKB-UniRule"/>
</dbReference>
<dbReference type="CDD" id="cd00950">
    <property type="entry name" value="DHDPS"/>
    <property type="match status" value="1"/>
</dbReference>
<dbReference type="FunFam" id="3.20.20.70:FF:000046">
    <property type="entry name" value="4-hydroxy-tetrahydrodipicolinate synthase"/>
    <property type="match status" value="1"/>
</dbReference>
<dbReference type="Gene3D" id="3.20.20.70">
    <property type="entry name" value="Aldolase class I"/>
    <property type="match status" value="1"/>
</dbReference>
<dbReference type="HAMAP" id="MF_00418">
    <property type="entry name" value="DapA"/>
    <property type="match status" value="1"/>
</dbReference>
<dbReference type="InterPro" id="IPR013785">
    <property type="entry name" value="Aldolase_TIM"/>
</dbReference>
<dbReference type="InterPro" id="IPR005263">
    <property type="entry name" value="DapA"/>
</dbReference>
<dbReference type="InterPro" id="IPR002220">
    <property type="entry name" value="DapA-like"/>
</dbReference>
<dbReference type="InterPro" id="IPR020625">
    <property type="entry name" value="Schiff_base-form_aldolases_AS"/>
</dbReference>
<dbReference type="InterPro" id="IPR020624">
    <property type="entry name" value="Schiff_base-form_aldolases_CS"/>
</dbReference>
<dbReference type="NCBIfam" id="TIGR00674">
    <property type="entry name" value="dapA"/>
    <property type="match status" value="1"/>
</dbReference>
<dbReference type="PANTHER" id="PTHR12128:SF66">
    <property type="entry name" value="4-HYDROXY-2-OXOGLUTARATE ALDOLASE, MITOCHONDRIAL"/>
    <property type="match status" value="1"/>
</dbReference>
<dbReference type="PANTHER" id="PTHR12128">
    <property type="entry name" value="DIHYDRODIPICOLINATE SYNTHASE"/>
    <property type="match status" value="1"/>
</dbReference>
<dbReference type="Pfam" id="PF00701">
    <property type="entry name" value="DHDPS"/>
    <property type="match status" value="1"/>
</dbReference>
<dbReference type="PIRSF" id="PIRSF001365">
    <property type="entry name" value="DHDPS"/>
    <property type="match status" value="1"/>
</dbReference>
<dbReference type="PRINTS" id="PR00146">
    <property type="entry name" value="DHPICSNTHASE"/>
</dbReference>
<dbReference type="SMART" id="SM01130">
    <property type="entry name" value="DHDPS"/>
    <property type="match status" value="1"/>
</dbReference>
<dbReference type="SUPFAM" id="SSF51569">
    <property type="entry name" value="Aldolase"/>
    <property type="match status" value="1"/>
</dbReference>
<dbReference type="PROSITE" id="PS00665">
    <property type="entry name" value="DHDPS_1"/>
    <property type="match status" value="1"/>
</dbReference>
<dbReference type="PROSITE" id="PS00666">
    <property type="entry name" value="DHDPS_2"/>
    <property type="match status" value="1"/>
</dbReference>
<comment type="function">
    <text evidence="1">Catalyzes the condensation of (S)-aspartate-beta-semialdehyde [(S)-ASA] and pyruvate to 4-hydroxy-tetrahydrodipicolinate (HTPA).</text>
</comment>
<comment type="catalytic activity">
    <reaction evidence="1">
        <text>L-aspartate 4-semialdehyde + pyruvate = (2S,4S)-4-hydroxy-2,3,4,5-tetrahydrodipicolinate + H2O + H(+)</text>
        <dbReference type="Rhea" id="RHEA:34171"/>
        <dbReference type="ChEBI" id="CHEBI:15361"/>
        <dbReference type="ChEBI" id="CHEBI:15377"/>
        <dbReference type="ChEBI" id="CHEBI:15378"/>
        <dbReference type="ChEBI" id="CHEBI:67139"/>
        <dbReference type="ChEBI" id="CHEBI:537519"/>
        <dbReference type="EC" id="4.3.3.7"/>
    </reaction>
</comment>
<comment type="pathway">
    <text evidence="1">Amino-acid biosynthesis; L-lysine biosynthesis via DAP pathway; (S)-tetrahydrodipicolinate from L-aspartate: step 3/4.</text>
</comment>
<comment type="subunit">
    <text evidence="1">Homotetramer; dimer of dimers.</text>
</comment>
<comment type="subcellular location">
    <subcellularLocation>
        <location evidence="1">Cytoplasm</location>
    </subcellularLocation>
</comment>
<comment type="similarity">
    <text evidence="1">Belongs to the DapA family.</text>
</comment>
<comment type="caution">
    <text evidence="2">Was originally thought to be a dihydrodipicolinate synthase (DHDPS), catalyzing the condensation of (S)-aspartate-beta-semialdehyde [(S)-ASA] and pyruvate to dihydrodipicolinate (DHDP). However, it was shown in E.coli that the product of the enzymatic reaction is not dihydrodipicolinate but in fact (4S)-4-hydroxy-2,3,4,5-tetrahydro-(2S)-dipicolinic acid (HTPA), and that the consecutive dehydration reaction leading to DHDP is not spontaneous but catalyzed by DapB.</text>
</comment>
<feature type="chain" id="PRO_1000134861" description="4-hydroxy-tetrahydrodipicolinate synthase">
    <location>
        <begin position="1"/>
        <end position="294"/>
    </location>
</feature>
<feature type="active site" description="Proton donor/acceptor" evidence="1">
    <location>
        <position position="133"/>
    </location>
</feature>
<feature type="active site" description="Schiff-base intermediate with substrate" evidence="1">
    <location>
        <position position="161"/>
    </location>
</feature>
<feature type="binding site" evidence="1">
    <location>
        <position position="45"/>
    </location>
    <ligand>
        <name>pyruvate</name>
        <dbReference type="ChEBI" id="CHEBI:15361"/>
    </ligand>
</feature>
<feature type="binding site" evidence="1">
    <location>
        <position position="203"/>
    </location>
    <ligand>
        <name>pyruvate</name>
        <dbReference type="ChEBI" id="CHEBI:15361"/>
    </ligand>
</feature>
<feature type="site" description="Part of a proton relay during catalysis" evidence="1">
    <location>
        <position position="44"/>
    </location>
</feature>
<feature type="site" description="Part of a proton relay during catalysis" evidence="1">
    <location>
        <position position="107"/>
    </location>
</feature>
<sequence length="294" mass="32245">MFKGSIVALITPMDEKGQICRISLEKLINYHVASKTEAIVSIGTTGESATLSQEEHINIVMLTLELADGRIPVIAGTGANATTEAISLTKRFEKSGVAGCLSVTPYYNRPTQEGLYQHFKAISENTELPQILYNVPSRTGCDLLPETVAKLSHFNNIIGIKEATGDLSRIHKIKELVKTNFLLISGDDATALDFMQLGGQGVISVTANIAAKEMMEICSYALKGDFINARSINKRLMLLHEALFIEPNPIPVKWLAKKIGLIKSDTLRLPMTPVLDSTRFQLEKAIQYANLKIS</sequence>